<feature type="chain" id="PRO_1000020635" description="tRNA dimethylallyltransferase">
    <location>
        <begin position="1"/>
        <end position="299"/>
    </location>
</feature>
<feature type="region of interest" description="Interaction with substrate tRNA" evidence="1">
    <location>
        <begin position="38"/>
        <end position="41"/>
    </location>
</feature>
<feature type="binding site" evidence="1">
    <location>
        <begin position="13"/>
        <end position="20"/>
    </location>
    <ligand>
        <name>ATP</name>
        <dbReference type="ChEBI" id="CHEBI:30616"/>
    </ligand>
</feature>
<feature type="binding site" evidence="1">
    <location>
        <begin position="15"/>
        <end position="20"/>
    </location>
    <ligand>
        <name>substrate</name>
    </ligand>
</feature>
<feature type="site" description="Interaction with substrate tRNA" evidence="1">
    <location>
        <position position="104"/>
    </location>
</feature>
<protein>
    <recommendedName>
        <fullName evidence="1">tRNA dimethylallyltransferase</fullName>
        <ecNumber evidence="1">2.5.1.75</ecNumber>
    </recommendedName>
    <alternativeName>
        <fullName evidence="1">Dimethylallyl diphosphate:tRNA dimethylallyltransferase</fullName>
        <shortName evidence="1">DMAPP:tRNA dimethylallyltransferase</shortName>
        <shortName evidence="1">DMATase</shortName>
    </alternativeName>
    <alternativeName>
        <fullName evidence="1">Isopentenyl-diphosphate:tRNA isopentenyltransferase</fullName>
        <shortName evidence="1">IPP transferase</shortName>
        <shortName evidence="1">IPPT</shortName>
        <shortName evidence="1">IPTase</shortName>
    </alternativeName>
</protein>
<sequence length="299" mass="34492">MLPSKPLVIVLIGPTASGKTELAIDIAKYFNIHIHNVDSRQIYRFMDIGTAKPTKVQQRAIKHFLIDVEDPSVKVNAKQFQEIATKSINRELNQKKTPFLVGGSGLYMNSIIKGFFAPDVPPQSFLRSQFEKLGQEKCWELLKVCDPELTKTINYADQIRTIRGLEVFYVTGKRMSSQRFQNPPPWRILELGINRVDLKERIFKRTKNMFEFGIIEETKNIINQYGSTLPLLETIGYKEAKNVIKENLTIEEAIELTTTKTIQFAKRQKTWFRNKNNAIWLNNKNLLKDAIIKIEYALG</sequence>
<proteinExistence type="inferred from homology"/>
<comment type="function">
    <text evidence="1">Catalyzes the transfer of a dimethylallyl group onto the adenine at position 37 in tRNAs that read codons beginning with uridine, leading to the formation of N6-(dimethylallyl)adenosine (i(6)A).</text>
</comment>
<comment type="catalytic activity">
    <reaction evidence="1">
        <text>adenosine(37) in tRNA + dimethylallyl diphosphate = N(6)-dimethylallyladenosine(37) in tRNA + diphosphate</text>
        <dbReference type="Rhea" id="RHEA:26482"/>
        <dbReference type="Rhea" id="RHEA-COMP:10162"/>
        <dbReference type="Rhea" id="RHEA-COMP:10375"/>
        <dbReference type="ChEBI" id="CHEBI:33019"/>
        <dbReference type="ChEBI" id="CHEBI:57623"/>
        <dbReference type="ChEBI" id="CHEBI:74411"/>
        <dbReference type="ChEBI" id="CHEBI:74415"/>
        <dbReference type="EC" id="2.5.1.75"/>
    </reaction>
</comment>
<comment type="cofactor">
    <cofactor evidence="1">
        <name>Mg(2+)</name>
        <dbReference type="ChEBI" id="CHEBI:18420"/>
    </cofactor>
</comment>
<comment type="subunit">
    <text evidence="1">Monomer.</text>
</comment>
<comment type="similarity">
    <text evidence="1">Belongs to the IPP transferase family.</text>
</comment>
<keyword id="KW-0067">ATP-binding</keyword>
<keyword id="KW-0460">Magnesium</keyword>
<keyword id="KW-0547">Nucleotide-binding</keyword>
<keyword id="KW-0808">Transferase</keyword>
<keyword id="KW-0819">tRNA processing</keyword>
<name>MIAA_PROM5</name>
<organism>
    <name type="scientific">Prochlorococcus marinus (strain MIT 9515)</name>
    <dbReference type="NCBI Taxonomy" id="167542"/>
    <lineage>
        <taxon>Bacteria</taxon>
        <taxon>Bacillati</taxon>
        <taxon>Cyanobacteriota</taxon>
        <taxon>Cyanophyceae</taxon>
        <taxon>Synechococcales</taxon>
        <taxon>Prochlorococcaceae</taxon>
        <taxon>Prochlorococcus</taxon>
    </lineage>
</organism>
<evidence type="ECO:0000255" key="1">
    <source>
        <dbReference type="HAMAP-Rule" id="MF_00185"/>
    </source>
</evidence>
<dbReference type="EC" id="2.5.1.75" evidence="1"/>
<dbReference type="EMBL" id="CP000552">
    <property type="protein sequence ID" value="ABM73031.1"/>
    <property type="molecule type" value="Genomic_DNA"/>
</dbReference>
<dbReference type="RefSeq" id="WP_011821116.1">
    <property type="nucleotide sequence ID" value="NC_008817.1"/>
</dbReference>
<dbReference type="SMR" id="A2BZ20"/>
<dbReference type="STRING" id="167542.P9515_18241"/>
<dbReference type="GeneID" id="60201590"/>
<dbReference type="KEGG" id="pmc:P9515_18241"/>
<dbReference type="eggNOG" id="COG0324">
    <property type="taxonomic scope" value="Bacteria"/>
</dbReference>
<dbReference type="HOGENOM" id="CLU_032616_0_1_3"/>
<dbReference type="OrthoDB" id="9776390at2"/>
<dbReference type="Proteomes" id="UP000001589">
    <property type="component" value="Chromosome"/>
</dbReference>
<dbReference type="GO" id="GO:0005524">
    <property type="term" value="F:ATP binding"/>
    <property type="evidence" value="ECO:0007669"/>
    <property type="project" value="UniProtKB-UniRule"/>
</dbReference>
<dbReference type="GO" id="GO:0052381">
    <property type="term" value="F:tRNA dimethylallyltransferase activity"/>
    <property type="evidence" value="ECO:0007669"/>
    <property type="project" value="UniProtKB-UniRule"/>
</dbReference>
<dbReference type="GO" id="GO:0006400">
    <property type="term" value="P:tRNA modification"/>
    <property type="evidence" value="ECO:0007669"/>
    <property type="project" value="TreeGrafter"/>
</dbReference>
<dbReference type="Gene3D" id="1.10.20.140">
    <property type="match status" value="1"/>
</dbReference>
<dbReference type="Gene3D" id="3.40.50.300">
    <property type="entry name" value="P-loop containing nucleotide triphosphate hydrolases"/>
    <property type="match status" value="1"/>
</dbReference>
<dbReference type="HAMAP" id="MF_00185">
    <property type="entry name" value="IPP_trans"/>
    <property type="match status" value="1"/>
</dbReference>
<dbReference type="InterPro" id="IPR039657">
    <property type="entry name" value="Dimethylallyltransferase"/>
</dbReference>
<dbReference type="InterPro" id="IPR018022">
    <property type="entry name" value="IPT"/>
</dbReference>
<dbReference type="InterPro" id="IPR027417">
    <property type="entry name" value="P-loop_NTPase"/>
</dbReference>
<dbReference type="NCBIfam" id="TIGR00174">
    <property type="entry name" value="miaA"/>
    <property type="match status" value="1"/>
</dbReference>
<dbReference type="PANTHER" id="PTHR11088">
    <property type="entry name" value="TRNA DIMETHYLALLYLTRANSFERASE"/>
    <property type="match status" value="1"/>
</dbReference>
<dbReference type="PANTHER" id="PTHR11088:SF60">
    <property type="entry name" value="TRNA DIMETHYLALLYLTRANSFERASE"/>
    <property type="match status" value="1"/>
</dbReference>
<dbReference type="Pfam" id="PF01715">
    <property type="entry name" value="IPPT"/>
    <property type="match status" value="1"/>
</dbReference>
<dbReference type="SUPFAM" id="SSF52540">
    <property type="entry name" value="P-loop containing nucleoside triphosphate hydrolases"/>
    <property type="match status" value="2"/>
</dbReference>
<reference key="1">
    <citation type="journal article" date="2007" name="PLoS Genet.">
        <title>Patterns and implications of gene gain and loss in the evolution of Prochlorococcus.</title>
        <authorList>
            <person name="Kettler G.C."/>
            <person name="Martiny A.C."/>
            <person name="Huang K."/>
            <person name="Zucker J."/>
            <person name="Coleman M.L."/>
            <person name="Rodrigue S."/>
            <person name="Chen F."/>
            <person name="Lapidus A."/>
            <person name="Ferriera S."/>
            <person name="Johnson J."/>
            <person name="Steglich C."/>
            <person name="Church G.M."/>
            <person name="Richardson P."/>
            <person name="Chisholm S.W."/>
        </authorList>
    </citation>
    <scope>NUCLEOTIDE SEQUENCE [LARGE SCALE GENOMIC DNA]</scope>
    <source>
        <strain>MIT 9515</strain>
    </source>
</reference>
<gene>
    <name evidence="1" type="primary">miaA</name>
    <name type="ordered locus">P9515_18241</name>
</gene>
<accession>A2BZ20</accession>